<accession>Q9NQG6</accession>
<accession>Q52MA5</accession>
<accession>Q7L890</accession>
<accession>Q9BUI3</accession>
<proteinExistence type="evidence at protein level"/>
<gene>
    <name evidence="20" type="primary">MIEF1</name>
    <name evidence="14" type="synonym">MID51</name>
    <name evidence="20" type="synonym">SMCR7L</name>
</gene>
<organism>
    <name type="scientific">Homo sapiens</name>
    <name type="common">Human</name>
    <dbReference type="NCBI Taxonomy" id="9606"/>
    <lineage>
        <taxon>Eukaryota</taxon>
        <taxon>Metazoa</taxon>
        <taxon>Chordata</taxon>
        <taxon>Craniata</taxon>
        <taxon>Vertebrata</taxon>
        <taxon>Euteleostomi</taxon>
        <taxon>Mammalia</taxon>
        <taxon>Eutheria</taxon>
        <taxon>Euarchontoglires</taxon>
        <taxon>Primates</taxon>
        <taxon>Haplorrhini</taxon>
        <taxon>Catarrhini</taxon>
        <taxon>Hominidae</taxon>
        <taxon>Homo</taxon>
    </lineage>
</organism>
<evidence type="ECO:0000250" key="1">
    <source>
        <dbReference type="UniProtKB" id="Q8BGV8"/>
    </source>
</evidence>
<evidence type="ECO:0000255" key="2"/>
<evidence type="ECO:0000256" key="3">
    <source>
        <dbReference type="SAM" id="MobiDB-lite"/>
    </source>
</evidence>
<evidence type="ECO:0000269" key="4">
    <source>
    </source>
</evidence>
<evidence type="ECO:0000269" key="5">
    <source>
    </source>
</evidence>
<evidence type="ECO:0000269" key="6">
    <source>
    </source>
</evidence>
<evidence type="ECO:0000269" key="7">
    <source>
    </source>
</evidence>
<evidence type="ECO:0000269" key="8">
    <source>
    </source>
</evidence>
<evidence type="ECO:0000269" key="9">
    <source>
    </source>
</evidence>
<evidence type="ECO:0000269" key="10">
    <source>
    </source>
</evidence>
<evidence type="ECO:0000269" key="11">
    <source>
    </source>
</evidence>
<evidence type="ECO:0000303" key="12">
    <source>
    </source>
</evidence>
<evidence type="ECO:0000303" key="13">
    <source>
    </source>
</evidence>
<evidence type="ECO:0000303" key="14">
    <source>
    </source>
</evidence>
<evidence type="ECO:0000303" key="15">
    <source>
    </source>
</evidence>
<evidence type="ECO:0000303" key="16">
    <source>
    </source>
</evidence>
<evidence type="ECO:0000303" key="17">
    <source>
    </source>
</evidence>
<evidence type="ECO:0000305" key="18"/>
<evidence type="ECO:0000305" key="19">
    <source>
    </source>
</evidence>
<evidence type="ECO:0000312" key="20">
    <source>
        <dbReference type="HGNC" id="HGNC:25979"/>
    </source>
</evidence>
<evidence type="ECO:0007744" key="21">
    <source>
    </source>
</evidence>
<evidence type="ECO:0007744" key="22">
    <source>
    </source>
</evidence>
<evidence type="ECO:0007744" key="23">
    <source>
    </source>
</evidence>
<evidence type="ECO:0007829" key="24">
    <source>
        <dbReference type="PDB" id="4NXT"/>
    </source>
</evidence>
<evidence type="ECO:0007829" key="25">
    <source>
        <dbReference type="PDB" id="4NXW"/>
    </source>
</evidence>
<evidence type="ECO:0007829" key="26">
    <source>
        <dbReference type="PDB" id="5X9B"/>
    </source>
</evidence>
<evidence type="ECO:0007829" key="27">
    <source>
        <dbReference type="PDB" id="5X9C"/>
    </source>
</evidence>
<reference key="1">
    <citation type="journal article" date="2003" name="Genome Res.">
        <title>Reevaluating human gene annotation: a second-generation analysis of chromosome 22.</title>
        <authorList>
            <person name="Collins J.E."/>
            <person name="Goward M.E."/>
            <person name="Cole C.G."/>
            <person name="Smink L.J."/>
            <person name="Huckle E.J."/>
            <person name="Knowles S."/>
            <person name="Bye J.M."/>
            <person name="Beare D.M."/>
            <person name="Dunham I."/>
        </authorList>
    </citation>
    <scope>NUCLEOTIDE SEQUENCE [LARGE SCALE MRNA] (ISOFORM 1)</scope>
</reference>
<reference key="2">
    <citation type="journal article" date="2004" name="Nat. Genet.">
        <title>Complete sequencing and characterization of 21,243 full-length human cDNAs.</title>
        <authorList>
            <person name="Ota T."/>
            <person name="Suzuki Y."/>
            <person name="Nishikawa T."/>
            <person name="Otsuki T."/>
            <person name="Sugiyama T."/>
            <person name="Irie R."/>
            <person name="Wakamatsu A."/>
            <person name="Hayashi K."/>
            <person name="Sato H."/>
            <person name="Nagai K."/>
            <person name="Kimura K."/>
            <person name="Makita H."/>
            <person name="Sekine M."/>
            <person name="Obayashi M."/>
            <person name="Nishi T."/>
            <person name="Shibahara T."/>
            <person name="Tanaka T."/>
            <person name="Ishii S."/>
            <person name="Yamamoto J."/>
            <person name="Saito K."/>
            <person name="Kawai Y."/>
            <person name="Isono Y."/>
            <person name="Nakamura Y."/>
            <person name="Nagahari K."/>
            <person name="Murakami K."/>
            <person name="Yasuda T."/>
            <person name="Iwayanagi T."/>
            <person name="Wagatsuma M."/>
            <person name="Shiratori A."/>
            <person name="Sudo H."/>
            <person name="Hosoiri T."/>
            <person name="Kaku Y."/>
            <person name="Kodaira H."/>
            <person name="Kondo H."/>
            <person name="Sugawara M."/>
            <person name="Takahashi M."/>
            <person name="Kanda K."/>
            <person name="Yokoi T."/>
            <person name="Furuya T."/>
            <person name="Kikkawa E."/>
            <person name="Omura Y."/>
            <person name="Abe K."/>
            <person name="Kamihara K."/>
            <person name="Katsuta N."/>
            <person name="Sato K."/>
            <person name="Tanikawa M."/>
            <person name="Yamazaki M."/>
            <person name="Ninomiya K."/>
            <person name="Ishibashi T."/>
            <person name="Yamashita H."/>
            <person name="Murakawa K."/>
            <person name="Fujimori K."/>
            <person name="Tanai H."/>
            <person name="Kimata M."/>
            <person name="Watanabe M."/>
            <person name="Hiraoka S."/>
            <person name="Chiba Y."/>
            <person name="Ishida S."/>
            <person name="Ono Y."/>
            <person name="Takiguchi S."/>
            <person name="Watanabe S."/>
            <person name="Yosida M."/>
            <person name="Hotuta T."/>
            <person name="Kusano J."/>
            <person name="Kanehori K."/>
            <person name="Takahashi-Fujii A."/>
            <person name="Hara H."/>
            <person name="Tanase T.-O."/>
            <person name="Nomura Y."/>
            <person name="Togiya S."/>
            <person name="Komai F."/>
            <person name="Hara R."/>
            <person name="Takeuchi K."/>
            <person name="Arita M."/>
            <person name="Imose N."/>
            <person name="Musashino K."/>
            <person name="Yuuki H."/>
            <person name="Oshima A."/>
            <person name="Sasaki N."/>
            <person name="Aotsuka S."/>
            <person name="Yoshikawa Y."/>
            <person name="Matsunawa H."/>
            <person name="Ichihara T."/>
            <person name="Shiohata N."/>
            <person name="Sano S."/>
            <person name="Moriya S."/>
            <person name="Momiyama H."/>
            <person name="Satoh N."/>
            <person name="Takami S."/>
            <person name="Terashima Y."/>
            <person name="Suzuki O."/>
            <person name="Nakagawa S."/>
            <person name="Senoh A."/>
            <person name="Mizoguchi H."/>
            <person name="Goto Y."/>
            <person name="Shimizu F."/>
            <person name="Wakebe H."/>
            <person name="Hishigaki H."/>
            <person name="Watanabe T."/>
            <person name="Sugiyama A."/>
            <person name="Takemoto M."/>
            <person name="Kawakami B."/>
            <person name="Yamazaki M."/>
            <person name="Watanabe K."/>
            <person name="Kumagai A."/>
            <person name="Itakura S."/>
            <person name="Fukuzumi Y."/>
            <person name="Fujimori Y."/>
            <person name="Komiyama M."/>
            <person name="Tashiro H."/>
            <person name="Tanigami A."/>
            <person name="Fujiwara T."/>
            <person name="Ono T."/>
            <person name="Yamada K."/>
            <person name="Fujii Y."/>
            <person name="Ozaki K."/>
            <person name="Hirao M."/>
            <person name="Ohmori Y."/>
            <person name="Kawabata A."/>
            <person name="Hikiji T."/>
            <person name="Kobatake N."/>
            <person name="Inagaki H."/>
            <person name="Ikema Y."/>
            <person name="Okamoto S."/>
            <person name="Okitani R."/>
            <person name="Kawakami T."/>
            <person name="Noguchi S."/>
            <person name="Itoh T."/>
            <person name="Shigeta K."/>
            <person name="Senba T."/>
            <person name="Matsumura K."/>
            <person name="Nakajima Y."/>
            <person name="Mizuno T."/>
            <person name="Morinaga M."/>
            <person name="Sasaki M."/>
            <person name="Togashi T."/>
            <person name="Oyama M."/>
            <person name="Hata H."/>
            <person name="Watanabe M."/>
            <person name="Komatsu T."/>
            <person name="Mizushima-Sugano J."/>
            <person name="Satoh T."/>
            <person name="Shirai Y."/>
            <person name="Takahashi Y."/>
            <person name="Nakagawa K."/>
            <person name="Okumura K."/>
            <person name="Nagase T."/>
            <person name="Nomura N."/>
            <person name="Kikuchi H."/>
            <person name="Masuho Y."/>
            <person name="Yamashita R."/>
            <person name="Nakai K."/>
            <person name="Yada T."/>
            <person name="Nakamura Y."/>
            <person name="Ohara O."/>
            <person name="Isogai T."/>
            <person name="Sugano S."/>
        </authorList>
    </citation>
    <scope>NUCLEOTIDE SEQUENCE [LARGE SCALE MRNA] (ISOFORM 2)</scope>
</reference>
<reference key="3">
    <citation type="journal article" date="2007" name="BMC Genomics">
        <title>The full-ORF clone resource of the German cDNA consortium.</title>
        <authorList>
            <person name="Bechtel S."/>
            <person name="Rosenfelder H."/>
            <person name="Duda A."/>
            <person name="Schmidt C.P."/>
            <person name="Ernst U."/>
            <person name="Wellenreuther R."/>
            <person name="Mehrle A."/>
            <person name="Schuster C."/>
            <person name="Bahr A."/>
            <person name="Bloecker H."/>
            <person name="Heubner D."/>
            <person name="Hoerlein A."/>
            <person name="Michel G."/>
            <person name="Wedler H."/>
            <person name="Koehrer K."/>
            <person name="Ottenwaelder B."/>
            <person name="Poustka A."/>
            <person name="Wiemann S."/>
            <person name="Schupp I."/>
        </authorList>
    </citation>
    <scope>NUCLEOTIDE SEQUENCE [LARGE SCALE MRNA] (ISOFORM 2)</scope>
    <source>
        <tissue>Testis</tissue>
    </source>
</reference>
<reference key="4">
    <citation type="journal article" date="1999" name="Nature">
        <title>The DNA sequence of human chromosome 22.</title>
        <authorList>
            <person name="Dunham I."/>
            <person name="Hunt A.R."/>
            <person name="Collins J.E."/>
            <person name="Bruskiewich R."/>
            <person name="Beare D.M."/>
            <person name="Clamp M."/>
            <person name="Smink L.J."/>
            <person name="Ainscough R."/>
            <person name="Almeida J.P."/>
            <person name="Babbage A.K."/>
            <person name="Bagguley C."/>
            <person name="Bailey J."/>
            <person name="Barlow K.F."/>
            <person name="Bates K.N."/>
            <person name="Beasley O.P."/>
            <person name="Bird C.P."/>
            <person name="Blakey S.E."/>
            <person name="Bridgeman A.M."/>
            <person name="Buck D."/>
            <person name="Burgess J."/>
            <person name="Burrill W.D."/>
            <person name="Burton J."/>
            <person name="Carder C."/>
            <person name="Carter N.P."/>
            <person name="Chen Y."/>
            <person name="Clark G."/>
            <person name="Clegg S.M."/>
            <person name="Cobley V.E."/>
            <person name="Cole C.G."/>
            <person name="Collier R.E."/>
            <person name="Connor R."/>
            <person name="Conroy D."/>
            <person name="Corby N.R."/>
            <person name="Coville G.J."/>
            <person name="Cox A.V."/>
            <person name="Davis J."/>
            <person name="Dawson E."/>
            <person name="Dhami P.D."/>
            <person name="Dockree C."/>
            <person name="Dodsworth S.J."/>
            <person name="Durbin R.M."/>
            <person name="Ellington A.G."/>
            <person name="Evans K.L."/>
            <person name="Fey J.M."/>
            <person name="Fleming K."/>
            <person name="French L."/>
            <person name="Garner A.A."/>
            <person name="Gilbert J.G.R."/>
            <person name="Goward M.E."/>
            <person name="Grafham D.V."/>
            <person name="Griffiths M.N.D."/>
            <person name="Hall C."/>
            <person name="Hall R.E."/>
            <person name="Hall-Tamlyn G."/>
            <person name="Heathcott R.W."/>
            <person name="Ho S."/>
            <person name="Holmes S."/>
            <person name="Hunt S.E."/>
            <person name="Jones M.C."/>
            <person name="Kershaw J."/>
            <person name="Kimberley A.M."/>
            <person name="King A."/>
            <person name="Laird G.K."/>
            <person name="Langford C.F."/>
            <person name="Leversha M.A."/>
            <person name="Lloyd C."/>
            <person name="Lloyd D.M."/>
            <person name="Martyn I.D."/>
            <person name="Mashreghi-Mohammadi M."/>
            <person name="Matthews L.H."/>
            <person name="Mccann O.T."/>
            <person name="Mcclay J."/>
            <person name="Mclaren S."/>
            <person name="McMurray A.A."/>
            <person name="Milne S.A."/>
            <person name="Mortimore B.J."/>
            <person name="Odell C.N."/>
            <person name="Pavitt R."/>
            <person name="Pearce A.V."/>
            <person name="Pearson D."/>
            <person name="Phillimore B.J.C.T."/>
            <person name="Phillips S.H."/>
            <person name="Plumb R.W."/>
            <person name="Ramsay H."/>
            <person name="Ramsey Y."/>
            <person name="Rogers L."/>
            <person name="Ross M.T."/>
            <person name="Scott C.E."/>
            <person name="Sehra H.K."/>
            <person name="Skuce C.D."/>
            <person name="Smalley S."/>
            <person name="Smith M.L."/>
            <person name="Soderlund C."/>
            <person name="Spragon L."/>
            <person name="Steward C.A."/>
            <person name="Sulston J.E."/>
            <person name="Swann R.M."/>
            <person name="Vaudin M."/>
            <person name="Wall M."/>
            <person name="Wallis J.M."/>
            <person name="Whiteley M.N."/>
            <person name="Willey D.L."/>
            <person name="Williams L."/>
            <person name="Williams S.A."/>
            <person name="Williamson H."/>
            <person name="Wilmer T.E."/>
            <person name="Wilming L."/>
            <person name="Wright C.L."/>
            <person name="Hubbard T."/>
            <person name="Bentley D.R."/>
            <person name="Beck S."/>
            <person name="Rogers J."/>
            <person name="Shimizu N."/>
            <person name="Minoshima S."/>
            <person name="Kawasaki K."/>
            <person name="Sasaki T."/>
            <person name="Asakawa S."/>
            <person name="Kudoh J."/>
            <person name="Shintani A."/>
            <person name="Shibuya K."/>
            <person name="Yoshizaki Y."/>
            <person name="Aoki N."/>
            <person name="Mitsuyama S."/>
            <person name="Roe B.A."/>
            <person name="Chen F."/>
            <person name="Chu L."/>
            <person name="Crabtree J."/>
            <person name="Deschamps S."/>
            <person name="Do A."/>
            <person name="Do T."/>
            <person name="Dorman A."/>
            <person name="Fang F."/>
            <person name="Fu Y."/>
            <person name="Hu P."/>
            <person name="Hua A."/>
            <person name="Kenton S."/>
            <person name="Lai H."/>
            <person name="Lao H.I."/>
            <person name="Lewis J."/>
            <person name="Lewis S."/>
            <person name="Lin S.-P."/>
            <person name="Loh P."/>
            <person name="Malaj E."/>
            <person name="Nguyen T."/>
            <person name="Pan H."/>
            <person name="Phan S."/>
            <person name="Qi S."/>
            <person name="Qian Y."/>
            <person name="Ray L."/>
            <person name="Ren Q."/>
            <person name="Shaull S."/>
            <person name="Sloan D."/>
            <person name="Song L."/>
            <person name="Wang Q."/>
            <person name="Wang Y."/>
            <person name="Wang Z."/>
            <person name="White J."/>
            <person name="Willingham D."/>
            <person name="Wu H."/>
            <person name="Yao Z."/>
            <person name="Zhan M."/>
            <person name="Zhang G."/>
            <person name="Chissoe S."/>
            <person name="Murray J."/>
            <person name="Miller N."/>
            <person name="Minx P."/>
            <person name="Fulton R."/>
            <person name="Johnson D."/>
            <person name="Bemis G."/>
            <person name="Bentley D."/>
            <person name="Bradshaw H."/>
            <person name="Bourne S."/>
            <person name="Cordes M."/>
            <person name="Du Z."/>
            <person name="Fulton L."/>
            <person name="Goela D."/>
            <person name="Graves T."/>
            <person name="Hawkins J."/>
            <person name="Hinds K."/>
            <person name="Kemp K."/>
            <person name="Latreille P."/>
            <person name="Layman D."/>
            <person name="Ozersky P."/>
            <person name="Rohlfing T."/>
            <person name="Scheet P."/>
            <person name="Walker C."/>
            <person name="Wamsley A."/>
            <person name="Wohldmann P."/>
            <person name="Pepin K."/>
            <person name="Nelson J."/>
            <person name="Korf I."/>
            <person name="Bedell J.A."/>
            <person name="Hillier L.W."/>
            <person name="Mardis E."/>
            <person name="Waterston R."/>
            <person name="Wilson R."/>
            <person name="Emanuel B.S."/>
            <person name="Shaikh T."/>
            <person name="Kurahashi H."/>
            <person name="Saitta S."/>
            <person name="Budarf M.L."/>
            <person name="McDermid H.E."/>
            <person name="Johnson A."/>
            <person name="Wong A.C.C."/>
            <person name="Morrow B.E."/>
            <person name="Edelmann L."/>
            <person name="Kim U.J."/>
            <person name="Shizuya H."/>
            <person name="Simon M.I."/>
            <person name="Dumanski J.P."/>
            <person name="Peyrard M."/>
            <person name="Kedra D."/>
            <person name="Seroussi E."/>
            <person name="Fransson I."/>
            <person name="Tapia I."/>
            <person name="Bruder C.E."/>
            <person name="O'Brien K.P."/>
            <person name="Wilkinson P."/>
            <person name="Bodenteich A."/>
            <person name="Hartman K."/>
            <person name="Hu X."/>
            <person name="Khan A.S."/>
            <person name="Lane L."/>
            <person name="Tilahun Y."/>
            <person name="Wright H."/>
        </authorList>
    </citation>
    <scope>NUCLEOTIDE SEQUENCE [LARGE SCALE GENOMIC DNA]</scope>
</reference>
<reference key="5">
    <citation type="submission" date="2005-07" db="EMBL/GenBank/DDBJ databases">
        <authorList>
            <person name="Mural R.J."/>
            <person name="Istrail S."/>
            <person name="Sutton G.G."/>
            <person name="Florea L."/>
            <person name="Halpern A.L."/>
            <person name="Mobarry C.M."/>
            <person name="Lippert R."/>
            <person name="Walenz B."/>
            <person name="Shatkay H."/>
            <person name="Dew I."/>
            <person name="Miller J.R."/>
            <person name="Flanigan M.J."/>
            <person name="Edwards N.J."/>
            <person name="Bolanos R."/>
            <person name="Fasulo D."/>
            <person name="Halldorsson B.V."/>
            <person name="Hannenhalli S."/>
            <person name="Turner R."/>
            <person name="Yooseph S."/>
            <person name="Lu F."/>
            <person name="Nusskern D.R."/>
            <person name="Shue B.C."/>
            <person name="Zheng X.H."/>
            <person name="Zhong F."/>
            <person name="Delcher A.L."/>
            <person name="Huson D.H."/>
            <person name="Kravitz S.A."/>
            <person name="Mouchard L."/>
            <person name="Reinert K."/>
            <person name="Remington K.A."/>
            <person name="Clark A.G."/>
            <person name="Waterman M.S."/>
            <person name="Eichler E.E."/>
            <person name="Adams M.D."/>
            <person name="Hunkapiller M.W."/>
            <person name="Myers E.W."/>
            <person name="Venter J.C."/>
        </authorList>
    </citation>
    <scope>NUCLEOTIDE SEQUENCE [LARGE SCALE GENOMIC DNA]</scope>
</reference>
<reference key="6">
    <citation type="journal article" date="2004" name="Genome Res.">
        <title>The status, quality, and expansion of the NIH full-length cDNA project: the Mammalian Gene Collection (MGC).</title>
        <authorList>
            <consortium name="The MGC Project Team"/>
        </authorList>
    </citation>
    <scope>NUCLEOTIDE SEQUENCE [LARGE SCALE MRNA] (ISOFORM 1)</scope>
    <source>
        <tissue>Brain</tissue>
    </source>
</reference>
<reference key="7">
    <citation type="journal article" date="2008" name="Mol. Cell">
        <title>Kinase-selective enrichment enables quantitative phosphoproteomics of the kinome across the cell cycle.</title>
        <authorList>
            <person name="Daub H."/>
            <person name="Olsen J.V."/>
            <person name="Bairlein M."/>
            <person name="Gnad F."/>
            <person name="Oppermann F.S."/>
            <person name="Korner R."/>
            <person name="Greff Z."/>
            <person name="Keri G."/>
            <person name="Stemmann O."/>
            <person name="Mann M."/>
        </authorList>
    </citation>
    <scope>PHOSPHORYLATION [LARGE SCALE ANALYSIS] AT SER-94</scope>
    <scope>IDENTIFICATION BY MASS SPECTROMETRY [LARGE SCALE ANALYSIS]</scope>
    <source>
        <tissue>Cervix carcinoma</tissue>
    </source>
</reference>
<reference key="8">
    <citation type="journal article" date="2008" name="Proc. Natl. Acad. Sci. U.S.A.">
        <title>A quantitative atlas of mitotic phosphorylation.</title>
        <authorList>
            <person name="Dephoure N."/>
            <person name="Zhou C."/>
            <person name="Villen J."/>
            <person name="Beausoleil S.A."/>
            <person name="Bakalarski C.E."/>
            <person name="Elledge S.J."/>
            <person name="Gygi S.P."/>
        </authorList>
    </citation>
    <scope>PHOSPHORYLATION [LARGE SCALE ANALYSIS] AT SER-55 AND SER-59</scope>
    <scope>IDENTIFICATION BY MASS SPECTROMETRY [LARGE SCALE ANALYSIS]</scope>
    <source>
        <tissue>Cervix carcinoma</tissue>
    </source>
</reference>
<reference key="9">
    <citation type="journal article" date="2011" name="EMBO Rep.">
        <title>MiD49 and MiD51, new components of the mitochondrial fission machinery.</title>
        <authorList>
            <person name="Palmer C.S."/>
            <person name="Osellame L.D."/>
            <person name="Laine D."/>
            <person name="Koutsopoulos O.S."/>
            <person name="Frazier A.E."/>
            <person name="Ryan M.T."/>
        </authorList>
    </citation>
    <scope>SUBCELLULAR LOCATION</scope>
    <scope>FUNCTION</scope>
</reference>
<reference key="10">
    <citation type="journal article" date="2011" name="EMBO J.">
        <title>Human MIEF1 recruits Drp1 to mitochondrial outer membranes and promotes mitochondrial fusion rather than fission.</title>
        <authorList>
            <person name="Zhao J."/>
            <person name="Liu T."/>
            <person name="Jin S."/>
            <person name="Wang X."/>
            <person name="Qu M."/>
            <person name="Uhlen P."/>
            <person name="Tomilin N."/>
            <person name="Shupliakov O."/>
            <person name="Lendahl U."/>
            <person name="Nister M."/>
        </authorList>
    </citation>
    <scope>SUBCELLULAR LOCATION</scope>
    <scope>SUBUNIT</scope>
    <scope>TISSUE SPECIFICITY</scope>
    <scope>INTERACTION WITH DNM1L AND FIS1</scope>
    <scope>FUNCTION</scope>
</reference>
<reference key="11">
    <citation type="journal article" date="2013" name="J. Biol. Chem.">
        <title>MiD49 and MiD51 can act independently of Mff and Fis1 in Drp1 recruitment and are specific for mitochondrial fission.</title>
        <authorList>
            <person name="Palmer C.S."/>
            <person name="Elgass K.D."/>
            <person name="Parton R.G."/>
            <person name="Osellame L.D."/>
            <person name="Stojanovski D."/>
            <person name="Ryan M.T."/>
        </authorList>
    </citation>
    <scope>FUNCTION</scope>
</reference>
<reference key="12">
    <citation type="journal article" date="2013" name="J. Proteome Res.">
        <title>Toward a comprehensive characterization of a human cancer cell phosphoproteome.</title>
        <authorList>
            <person name="Zhou H."/>
            <person name="Di Palma S."/>
            <person name="Preisinger C."/>
            <person name="Peng M."/>
            <person name="Polat A.N."/>
            <person name="Heck A.J."/>
            <person name="Mohammed S."/>
        </authorList>
    </citation>
    <scope>PHOSPHORYLATION [LARGE SCALE ANALYSIS] AT SER-55</scope>
    <scope>IDENTIFICATION BY MASS SPECTROMETRY [LARGE SCALE ANALYSIS]</scope>
    <source>
        <tissue>Erythroleukemia</tissue>
    </source>
</reference>
<reference key="13">
    <citation type="journal article" date="2013" name="Mol. Biol. Cell">
        <title>Fis1, Mff, MiD49, and MiD51 mediate Drp1 recruitment in mitochondrial fission.</title>
        <authorList>
            <person name="Loson O.C."/>
            <person name="Song Z."/>
            <person name="Chen H."/>
            <person name="Chan D.C."/>
        </authorList>
    </citation>
    <scope>FUNCTION</scope>
    <scope>INTERACTION WITH DNM1L</scope>
</reference>
<reference key="14">
    <citation type="journal article" date="2013" name="Proc. Natl. Acad. Sci. U.S.A.">
        <title>Interchangeable adaptors regulate mitochondrial dynamin assembly for membrane scission.</title>
        <authorList>
            <person name="Koirala S."/>
            <person name="Guo Q."/>
            <person name="Kalia R."/>
            <person name="Bui H.T."/>
            <person name="Eckert D.M."/>
            <person name="Frost A."/>
            <person name="Shaw J.M."/>
        </authorList>
    </citation>
    <scope>FUNCTION</scope>
</reference>
<reference key="15">
    <citation type="journal article" date="2014" name="J. Proteomics">
        <title>An enzyme assisted RP-RPLC approach for in-depth analysis of human liver phosphoproteome.</title>
        <authorList>
            <person name="Bian Y."/>
            <person name="Song C."/>
            <person name="Cheng K."/>
            <person name="Dong M."/>
            <person name="Wang F."/>
            <person name="Huang J."/>
            <person name="Sun D."/>
            <person name="Wang L."/>
            <person name="Ye M."/>
            <person name="Zou H."/>
        </authorList>
    </citation>
    <scope>IDENTIFICATION BY MASS SPECTROMETRY [LARGE SCALE ANALYSIS]</scope>
    <source>
        <tissue>Liver</tissue>
    </source>
</reference>
<reference key="16">
    <citation type="journal article" date="2015" name="Elife">
        <title>Translation of 5' leaders is pervasive in genes resistant to eIF2 repression.</title>
        <authorList>
            <person name="Andreev D.E."/>
            <person name="O'Connor P.B."/>
            <person name="Fahey C."/>
            <person name="Kenny E.M."/>
            <person name="Terenin I.M."/>
            <person name="Dmitriev S.E."/>
            <person name="Cormican P."/>
            <person name="Morris D.W."/>
            <person name="Shatsky I.N."/>
            <person name="Baranov P.V."/>
        </authorList>
    </citation>
    <scope>ALTERNATIVE INITIATION (ISOFORM 2)</scope>
</reference>
<reference key="17">
    <citation type="journal article" date="2017" name="Elife">
        <title>Deep transcriptome annotation enables the discovery and functional characterization of cryptic small proteins.</title>
        <authorList>
            <person name="Samandi S."/>
            <person name="Roy A.V."/>
            <person name="Delcourt V."/>
            <person name="Lucier J.F."/>
            <person name="Gagnon J."/>
            <person name="Beaudoin M.C."/>
            <person name="Vanderperre B."/>
            <person name="Breton M.A."/>
            <person name="Motard J."/>
            <person name="Jacques J.F."/>
            <person name="Brunelle M."/>
            <person name="Gagnon-Arsenault I."/>
            <person name="Fournier I."/>
            <person name="Ouangraoua A."/>
            <person name="Hunting D.J."/>
            <person name="Cohen A.A."/>
            <person name="Landry C.R."/>
            <person name="Scott M.S."/>
            <person name="Roucou X."/>
        </authorList>
    </citation>
    <scope>FUNCTION</scope>
</reference>
<reference key="18">
    <citation type="journal article" date="2020" name="Mol. Cell. Proteomics">
        <title>The mitochondrial acyl-carrier protein interaction network highlights important roles for LYRM family members in complex I and mitoribosome assembly.</title>
        <authorList>
            <person name="Dibley M.G."/>
            <person name="Formosa L.E."/>
            <person name="Lyu B."/>
            <person name="Reljic B."/>
            <person name="McGann D."/>
            <person name="Muellner-Wong L."/>
            <person name="Kraus F."/>
            <person name="Sharpe A.J."/>
            <person name="Stroud D.A."/>
            <person name="Ryan M.T."/>
        </authorList>
    </citation>
    <scope>IDENTIFICATION (ISOFORM 3)</scope>
</reference>
<reference key="19">
    <citation type="journal article" date="2014" name="J. Cell Biol.">
        <title>Structural and functional analysis of MiD51, a dynamin receptor required for mitochondrial fission.</title>
        <authorList>
            <person name="Richter V."/>
            <person name="Palmer C.S."/>
            <person name="Osellame L.D."/>
            <person name="Singh A.P."/>
            <person name="Elgass K."/>
            <person name="Stroud D.A."/>
            <person name="Sesaki H."/>
            <person name="Kvansakul M."/>
            <person name="Ryan M.T."/>
        </authorList>
    </citation>
    <scope>X-RAY CRYSTALLOGRAPHY (2.12 ANGSTROMS) OF 119-463 IN COMPLEXES WITH ADP AND GDP</scope>
    <scope>NUCLEOTIDE-BINDING</scope>
    <scope>FUNCTION</scope>
    <scope>INTERACTION WITH DNM1L</scope>
    <scope>SUBCELLULAR LOCATION</scope>
    <scope>MUTAGENESIS OF HIS-201; ARG-235; 238-PRO--PRO-242; ARG-342; LYS-368 AND LYS-372</scope>
</reference>
<reference key="20">
    <citation type="journal article" date="2021" name="Mol. Neurodegener.">
        <title>Dominant mutations in MIEF1 affect mitochondrial dynamics and cause a singular late onset optic neuropathy.</title>
        <authorList>
            <person name="Charif M."/>
            <person name="Wong Y.C."/>
            <person name="Kim S."/>
            <person name="Guichet A."/>
            <person name="Vignal C."/>
            <person name="Zanlonghi X."/>
            <person name="Bensaid P."/>
            <person name="Procaccio V."/>
            <person name="Bonneau D."/>
            <person name="Amati-Bonneau P."/>
            <person name="Reynier P."/>
            <person name="Krainc D."/>
            <person name="Lenaers G."/>
        </authorList>
    </citation>
    <scope>VARIANTS OPA14 TRP-146 AND ASN-240</scope>
    <scope>CHARACTERIZATION OF VARIANTS OPA14 TRP-146 AND ASN-240</scope>
    <scope>INVOLVEMENT IN OPA14</scope>
    <scope>FUNCTION</scope>
</reference>
<comment type="function">
    <text evidence="4 5 6 7 8 9 10 11">Mitochondrial outer membrane protein which regulates mitochondrial fission/fusion dynamics (PubMed:21701560, PubMed:23921378, PubMed:33632269). Promotes the recruitment and association of the fission mediator dynamin-related protein 1 (DNM1L) to the mitochondrial surface independently of the mitochondrial fission FIS1 and MFF proteins. Regulates DNM1L GTPase activity and DNM1L oligomerization. Binds ADP and can also bind GDP, although with lower affinity. Does not bind CDP, UDP, ATP, AMP or GTP. Inhibits DNM1L GTPase activity in the absence of bound ADP. Requires ADP to stimulate DNM1L GTPase activity and the assembly of DNM1L into long, oligomeric tubules with a spiral pattern, as opposed to the ring-like DNM1L oligomers observed in the absence of bound ADP. Does not require ADP for its function in recruiting DNM1L.</text>
</comment>
<comment type="subunit">
    <text evidence="5 6 9">Homodimer. Interacts with DNM1L.</text>
</comment>
<comment type="interaction">
    <interactant intactId="EBI-740987">
        <id>Q9NQG6</id>
    </interactant>
    <interactant intactId="EBI-2813554">
        <id>Q8WTS1</id>
        <label>ABHD5</label>
    </interactant>
    <organismsDiffer>false</organismsDiffer>
    <experiments>5</experiments>
</comment>
<comment type="interaction">
    <interactant intactId="EBI-740987">
        <id>Q9NQG6</id>
    </interactant>
    <interactant intactId="EBI-741181">
        <id>Q6RW13</id>
        <label>AGTRAP</label>
    </interactant>
    <organismsDiffer>false</organismsDiffer>
    <experiments>3</experiments>
</comment>
<comment type="interaction">
    <interactant intactId="EBI-740987">
        <id>Q9NQG6</id>
    </interactant>
    <interactant intactId="EBI-11522760">
        <id>Q6RW13-2</id>
        <label>AGTRAP</label>
    </interactant>
    <organismsDiffer>false</organismsDiffer>
    <experiments>3</experiments>
</comment>
<comment type="interaction">
    <interactant intactId="EBI-740987">
        <id>Q9NQG6</id>
    </interactant>
    <interactant intactId="EBI-638194">
        <id>P53365</id>
        <label>ARFIP2</label>
    </interactant>
    <organismsDiffer>false</organismsDiffer>
    <experiments>3</experiments>
</comment>
<comment type="interaction">
    <interactant intactId="EBI-740987">
        <id>Q9NQG6</id>
    </interactant>
    <interactant intactId="EBI-2860752">
        <id>O75915</id>
        <label>ARL6IP5</label>
    </interactant>
    <organismsDiffer>false</organismsDiffer>
    <experiments>3</experiments>
</comment>
<comment type="interaction">
    <interactant intactId="EBI-740987">
        <id>Q9NQG6</id>
    </interactant>
    <interactant intactId="EBI-2606700">
        <id>P18859</id>
        <label>ATP5PF</label>
    </interactant>
    <organismsDiffer>false</organismsDiffer>
    <experiments>3</experiments>
</comment>
<comment type="interaction">
    <interactant intactId="EBI-740987">
        <id>Q9NQG6</id>
    </interactant>
    <interactant intactId="EBI-11522780">
        <id>Q96DZ9-2</id>
        <label>CMTM5</label>
    </interactant>
    <organismsDiffer>false</organismsDiffer>
    <experiments>3</experiments>
</comment>
<comment type="interaction">
    <interactant intactId="EBI-740987">
        <id>Q9NQG6</id>
    </interactant>
    <interactant intactId="EBI-1054315">
        <id>Q9NX76</id>
        <label>CMTM6</label>
    </interactant>
    <organismsDiffer>false</organismsDiffer>
    <experiments>3</experiments>
</comment>
<comment type="interaction">
    <interactant intactId="EBI-740987">
        <id>Q9NQG6</id>
    </interactant>
    <interactant intactId="EBI-724571">
        <id>O00429</id>
        <label>DNM1L</label>
    </interactant>
    <organismsDiffer>false</organismsDiffer>
    <experiments>11</experiments>
</comment>
<comment type="interaction">
    <interactant intactId="EBI-740987">
        <id>Q9NQG6</id>
    </interactant>
    <interactant intactId="EBI-14240149">
        <id>B3EWG3</id>
        <label>FAM25A</label>
    </interactant>
    <organismsDiffer>false</organismsDiffer>
    <experiments>3</experiments>
</comment>
<comment type="interaction">
    <interactant intactId="EBI-740987">
        <id>Q9NQG6</id>
    </interactant>
    <interactant intactId="EBI-3385283">
        <id>Q9Y3D6</id>
        <label>FIS1</label>
    </interactant>
    <organismsDiffer>false</organismsDiffer>
    <experiments>4</experiments>
</comment>
<comment type="interaction">
    <interactant intactId="EBI-740987">
        <id>Q9NQG6</id>
    </interactant>
    <interactant intactId="EBI-12937691">
        <id>Q9BUP3-3</id>
        <label>HTATIP2</label>
    </interactant>
    <organismsDiffer>false</organismsDiffer>
    <experiments>3</experiments>
</comment>
<comment type="interaction">
    <interactant intactId="EBI-740987">
        <id>Q9NQG6</id>
    </interactant>
    <interactant intactId="EBI-740978">
        <id>P43355</id>
        <label>MAGEA1</label>
    </interactant>
    <organismsDiffer>false</organismsDiffer>
    <experiments>7</experiments>
</comment>
<comment type="interaction">
    <interactant intactId="EBI-740987">
        <id>Q9NQG6</id>
    </interactant>
    <interactant intactId="EBI-944295">
        <id>Q969L2</id>
        <label>MAL2</label>
    </interactant>
    <organismsDiffer>false</organismsDiffer>
    <experiments>3</experiments>
</comment>
<comment type="interaction">
    <interactant intactId="EBI-740987">
        <id>Q9NQG6</id>
    </interactant>
    <interactant intactId="EBI-394678">
        <id>Q13503</id>
        <label>MED21</label>
    </interactant>
    <organismsDiffer>false</organismsDiffer>
    <experiments>3</experiments>
</comment>
<comment type="interaction">
    <interactant intactId="EBI-740987">
        <id>Q9NQG6</id>
    </interactant>
    <interactant intactId="EBI-740987">
        <id>Q9NQG6</id>
        <label>MIEF1</label>
    </interactant>
    <organismsDiffer>false</organismsDiffer>
    <experiments>2</experiments>
</comment>
<comment type="interaction">
    <interactant intactId="EBI-740987">
        <id>Q9NQG6</id>
    </interactant>
    <interactant intactId="EBI-725795">
        <id>O60664</id>
        <label>PLIN3</label>
    </interactant>
    <organismsDiffer>false</organismsDiffer>
    <experiments>3</experiments>
</comment>
<comment type="interaction">
    <interactant intactId="EBI-740987">
        <id>Q9NQG6</id>
    </interactant>
    <interactant intactId="EBI-2506064">
        <id>O60831</id>
        <label>PRAF2</label>
    </interactant>
    <organismsDiffer>false</organismsDiffer>
    <experiments>3</experiments>
</comment>
<comment type="interaction">
    <interactant intactId="EBI-740987">
        <id>Q9NQG6</id>
    </interactant>
    <interactant intactId="EBI-738624">
        <id>Q16378</id>
        <label>PRR4</label>
    </interactant>
    <organismsDiffer>false</organismsDiffer>
    <experiments>3</experiments>
</comment>
<comment type="interaction">
    <interactant intactId="EBI-740987">
        <id>Q9NQG6</id>
    </interactant>
    <interactant intactId="EBI-359352">
        <id>P25786</id>
        <label>PSMA1</label>
    </interactant>
    <organismsDiffer>false</organismsDiffer>
    <experiments>3</experiments>
</comment>
<comment type="interaction">
    <interactant intactId="EBI-740987">
        <id>Q9NQG6</id>
    </interactant>
    <interactant intactId="EBI-14065960">
        <id>Q96HR9-2</id>
        <label>REEP6</label>
    </interactant>
    <organismsDiffer>false</organismsDiffer>
    <experiments>3</experiments>
</comment>
<comment type="interaction">
    <interactant intactId="EBI-740987">
        <id>Q9NQG6</id>
    </interactant>
    <interactant intactId="EBI-9071725">
        <id>P08247</id>
        <label>SYP</label>
    </interactant>
    <organismsDiffer>false</organismsDiffer>
    <experiments>3</experiments>
</comment>
<comment type="interaction">
    <interactant intactId="EBI-740987">
        <id>Q9NQG6</id>
    </interactant>
    <interactant intactId="EBI-1044859">
        <id>Q9UBN6</id>
        <label>TNFRSF10D</label>
    </interactant>
    <organismsDiffer>false</organismsDiffer>
    <experiments>3</experiments>
</comment>
<comment type="interaction">
    <interactant intactId="EBI-740987">
        <id>Q9NQG6</id>
    </interactant>
    <interactant intactId="EBI-12124194">
        <id>P55327-2</id>
        <label>TPD52</label>
    </interactant>
    <organismsDiffer>false</organismsDiffer>
    <experiments>3</experiments>
</comment>
<comment type="interaction">
    <interactant intactId="EBI-740987">
        <id>Q9NQG6</id>
    </interactant>
    <interactant intactId="EBI-10173939">
        <id>Q9UMX0-2</id>
        <label>UBQLN1</label>
    </interactant>
    <organismsDiffer>false</organismsDiffer>
    <experiments>3</experiments>
</comment>
<comment type="interaction">
    <interactant intactId="EBI-740987">
        <id>Q9NQG6</id>
    </interactant>
    <interactant intactId="EBI-947187">
        <id>Q9UHD9</id>
        <label>UBQLN2</label>
    </interactant>
    <organismsDiffer>false</organismsDiffer>
    <experiments>3</experiments>
</comment>
<comment type="subcellular location">
    <subcellularLocation>
        <location evidence="4 5 9">Mitochondrion outer membrane</location>
        <topology evidence="4 5 9">Single-pass membrane protein</topology>
    </subcellularLocation>
</comment>
<comment type="alternative products">
    <event type="alternative splicing"/>
    <event type="alternative initiation"/>
    <isoform>
        <id>Q9NQG6-1</id>
        <name>1</name>
        <name evidence="14">MID51</name>
        <sequence type="displayed"/>
    </isoform>
    <isoform>
        <id>Q9NQG6-2</id>
        <name>2</name>
        <sequence type="described" ref="VSP_056383 VSP_056384"/>
    </isoform>
    <isoform>
        <id>L0R8F8-1</id>
        <name>3</name>
        <name evidence="15">uORF</name>
        <name evidence="16">AltMIEF1</name>
        <name evidence="17">AltMiD51</name>
        <sequence type="external"/>
    </isoform>
</comment>
<comment type="tissue specificity">
    <text evidence="5">Expression is relatively high in heart, skeletal muscle, pancreas and kidney.</text>
</comment>
<comment type="disease" evidence="11">
    <disease id="DI-06783">
        <name>Optic atrophy 14</name>
        <acronym>OPA14</acronym>
        <description>A disease characterized by visual impairment in association with optic atrophy. Atrophy of the optic disk indicates a deficiency in the number of nerve fibers which arise in the retina and converge to form the optic disk, optic nerve, optic chiasm and optic tracts. OPA14 is an autosomal dominant form characterized by adult-onset progressive reduction in visual acuity, and pale and excavated optic disk. Optical coherence tomography discloses a severe loss of the retinal nerve fiber layer.</description>
        <dbReference type="MIM" id="620550"/>
    </disease>
    <text>The disease may be caused by variants affecting the gene represented in this entry.</text>
</comment>
<comment type="similarity">
    <text evidence="18">Belongs to the SMCR7 family.</text>
</comment>
<comment type="caution">
    <text evidence="18">Was submitted as a Xenopus tropicalis sequence in INSDC entry BC090137. However, this sequence appears to be from human.</text>
</comment>
<protein>
    <recommendedName>
        <fullName evidence="19">Mitochondrial dynamics protein MIEF1</fullName>
    </recommendedName>
    <alternativeName>
        <fullName>Mitochondrial dynamics protein of 51 kDa</fullName>
    </alternativeName>
    <alternativeName>
        <fullName evidence="20">Mitochondrial elongation factor 1</fullName>
    </alternativeName>
    <alternativeName>
        <fullName>Smith-Magenis syndrome chromosomal region candidate gene 7 protein-like</fullName>
        <shortName>SMCR7-like protein</shortName>
    </alternativeName>
</protein>
<feature type="chain" id="PRO_0000310448" description="Mitochondrial dynamics protein MIEF1">
    <location>
        <begin position="1"/>
        <end position="463"/>
    </location>
</feature>
<feature type="topological domain" description="Mitochondrial intermembrane" evidence="2">
    <location>
        <begin position="1"/>
        <end position="23"/>
    </location>
</feature>
<feature type="transmembrane region" description="Helical" evidence="2">
    <location>
        <begin position="24"/>
        <end position="46"/>
    </location>
</feature>
<feature type="topological domain" description="Cytoplasmic" evidence="2">
    <location>
        <begin position="47"/>
        <end position="463"/>
    </location>
</feature>
<feature type="region of interest" description="Dimerization">
    <location>
        <begin position="49"/>
        <end position="195"/>
    </location>
</feature>
<feature type="region of interest" description="Disordered" evidence="3">
    <location>
        <begin position="57"/>
        <end position="77"/>
    </location>
</feature>
<feature type="region of interest" description="Disordered" evidence="3">
    <location>
        <begin position="96"/>
        <end position="123"/>
    </location>
</feature>
<feature type="region of interest" description="Important for interaction with DNM1L">
    <location>
        <begin position="160"/>
        <end position="169"/>
    </location>
</feature>
<feature type="region of interest" description="Important for interaction with DNM1L">
    <location>
        <begin position="234"/>
        <end position="242"/>
    </location>
</feature>
<feature type="compositionally biased region" description="Low complexity" evidence="3">
    <location>
        <begin position="100"/>
        <end position="110"/>
    </location>
</feature>
<feature type="binding site">
    <location>
        <position position="187"/>
    </location>
    <ligand>
        <name>ADP</name>
        <dbReference type="ChEBI" id="CHEBI:456216"/>
    </ligand>
</feature>
<feature type="binding site">
    <location>
        <position position="189"/>
    </location>
    <ligand>
        <name>ADP</name>
        <dbReference type="ChEBI" id="CHEBI:456216"/>
    </ligand>
</feature>
<feature type="binding site">
    <location>
        <position position="201"/>
    </location>
    <ligand>
        <name>ADP</name>
        <dbReference type="ChEBI" id="CHEBI:456216"/>
    </ligand>
</feature>
<feature type="binding site">
    <location>
        <position position="340"/>
    </location>
    <ligand>
        <name>ADP</name>
        <dbReference type="ChEBI" id="CHEBI:456216"/>
    </ligand>
</feature>
<feature type="binding site">
    <location>
        <position position="342"/>
    </location>
    <ligand>
        <name>ADP</name>
        <dbReference type="ChEBI" id="CHEBI:456216"/>
    </ligand>
</feature>
<feature type="binding site">
    <location>
        <position position="368"/>
    </location>
    <ligand>
        <name>ADP</name>
        <dbReference type="ChEBI" id="CHEBI:456216"/>
    </ligand>
</feature>
<feature type="modified residue" description="Phosphoserine" evidence="21 23">
    <location>
        <position position="55"/>
    </location>
</feature>
<feature type="modified residue" description="Phosphoserine" evidence="21">
    <location>
        <position position="59"/>
    </location>
</feature>
<feature type="modified residue" description="Phosphoserine" evidence="1">
    <location>
        <position position="79"/>
    </location>
</feature>
<feature type="modified residue" description="Phosphoserine" evidence="22">
    <location>
        <position position="94"/>
    </location>
</feature>
<feature type="splice variant" id="VSP_056383" description="In isoform 2." evidence="12 13">
    <original>DTFCPPRPKPVARKGQVDLKKSRLRMSLQEKLLTYYRNRAA</original>
    <variation>GETSYLLPEPGSHPCWRAGSGQASCCGHMCRAPELPAGQVA</variation>
    <location>
        <begin position="108"/>
        <end position="148"/>
    </location>
</feature>
<feature type="splice variant" id="VSP_056384" description="In isoform 2." evidence="12 13">
    <location>
        <begin position="149"/>
        <end position="463"/>
    </location>
</feature>
<feature type="sequence variant" id="VAR_037040" description="In dbSNP:rs2272830.">
    <original>G</original>
    <variation>R</variation>
    <location>
        <position position="78"/>
    </location>
</feature>
<feature type="sequence variant" id="VAR_037041" description="In dbSNP:rs17001213.">
    <original>T</original>
    <variation>M</variation>
    <location>
        <position position="89"/>
    </location>
</feature>
<feature type="sequence variant" id="VAR_089059" description="In OPA14; uncertain significance; loss of function in positive regulation of mitochondrial fusion; no effect on mitochondrial localization; no effect on homodimerization." evidence="11">
    <original>R</original>
    <variation>W</variation>
    <location>
        <position position="146"/>
    </location>
</feature>
<feature type="sequence variant" id="VAR_037042" description="In dbSNP:rs2232088.">
    <original>R</original>
    <variation>W</variation>
    <location>
        <position position="169"/>
    </location>
</feature>
<feature type="sequence variant" id="VAR_089060" description="In OPA14; uncertain significance; loss of function in positive regulation of mitochondrial fusion; no effect on mitochondrial localization; no effect on homodimerization." evidence="11">
    <original>Y</original>
    <variation>N</variation>
    <location>
        <position position="240"/>
    </location>
</feature>
<feature type="sequence variant" id="VAR_037043" description="In dbSNP:rs2232091.">
    <original>D</original>
    <variation>N</variation>
    <location>
        <position position="264"/>
    </location>
</feature>
<feature type="mutagenesis site" description="Abolishes nucleotide-binding, but not DNM1L recruitment; when associated with E-342; E-368 and E-372." evidence="9">
    <original>H</original>
    <variation>D</variation>
    <location>
        <position position="201"/>
    </location>
</feature>
<feature type="mutagenesis site" description="No effect on mitochondrial localization. Impairs DNM1L recruitment." evidence="9">
    <original>R</original>
    <variation>A</variation>
    <location>
        <position position="235"/>
    </location>
</feature>
<feature type="mutagenesis site" description="No effect on mitochondrial localization. Impairs DNM1L recruitment." evidence="9">
    <location>
        <begin position="238"/>
        <end position="242"/>
    </location>
</feature>
<feature type="mutagenesis site" description="Abolishes nucleotide-binding, but not DNM1L recruitment; when associated with D-201; E-368 and E-372." evidence="9">
    <original>R</original>
    <variation>E</variation>
    <location>
        <position position="342"/>
    </location>
</feature>
<feature type="mutagenesis site" description="Abolishes nucleotide-binding, but not DNM1L recruitment; when associated with D-201; E-342 and E-372." evidence="9">
    <original>K</original>
    <variation>E</variation>
    <location>
        <position position="368"/>
    </location>
</feature>
<feature type="mutagenesis site" description="Abolishes nucleotide-binding, but not DNM1L recruitment; when associated with D-201; E-342 and E-368." evidence="9">
    <original>K</original>
    <variation>E</variation>
    <location>
        <position position="372"/>
    </location>
</feature>
<feature type="helix" evidence="27">
    <location>
        <begin position="135"/>
        <end position="145"/>
    </location>
</feature>
<feature type="helix" evidence="27">
    <location>
        <begin position="151"/>
        <end position="175"/>
    </location>
</feature>
<feature type="strand" evidence="24">
    <location>
        <begin position="179"/>
        <end position="181"/>
    </location>
</feature>
<feature type="strand" evidence="27">
    <location>
        <begin position="185"/>
        <end position="188"/>
    </location>
</feature>
<feature type="turn" evidence="27">
    <location>
        <begin position="189"/>
        <end position="193"/>
    </location>
</feature>
<feature type="turn" evidence="26">
    <location>
        <begin position="194"/>
        <end position="198"/>
    </location>
</feature>
<feature type="strand" evidence="27">
    <location>
        <begin position="201"/>
        <end position="208"/>
    </location>
</feature>
<feature type="turn" evidence="27">
    <location>
        <begin position="212"/>
        <end position="214"/>
    </location>
</feature>
<feature type="strand" evidence="27">
    <location>
        <begin position="215"/>
        <end position="219"/>
    </location>
</feature>
<feature type="helix" evidence="27">
    <location>
        <begin position="220"/>
        <end position="222"/>
    </location>
</feature>
<feature type="strand" evidence="24">
    <location>
        <begin position="223"/>
        <end position="225"/>
    </location>
</feature>
<feature type="strand" evidence="27">
    <location>
        <begin position="230"/>
        <end position="235"/>
    </location>
</feature>
<feature type="turn" evidence="27">
    <location>
        <begin position="238"/>
        <end position="240"/>
    </location>
</feature>
<feature type="helix" evidence="27">
    <location>
        <begin position="247"/>
        <end position="251"/>
    </location>
</feature>
<feature type="helix" evidence="27">
    <location>
        <begin position="259"/>
        <end position="271"/>
    </location>
</feature>
<feature type="helix" evidence="25">
    <location>
        <begin position="272"/>
        <end position="274"/>
    </location>
</feature>
<feature type="helix" evidence="27">
    <location>
        <begin position="276"/>
        <end position="283"/>
    </location>
</feature>
<feature type="strand" evidence="27">
    <location>
        <begin position="286"/>
        <end position="289"/>
    </location>
</feature>
<feature type="strand" evidence="27">
    <location>
        <begin position="297"/>
        <end position="303"/>
    </location>
</feature>
<feature type="strand" evidence="27">
    <location>
        <begin position="306"/>
        <end position="318"/>
    </location>
</feature>
<feature type="strand" evidence="27">
    <location>
        <begin position="321"/>
        <end position="324"/>
    </location>
</feature>
<feature type="helix" evidence="27">
    <location>
        <begin position="331"/>
        <end position="334"/>
    </location>
</feature>
<feature type="strand" evidence="27">
    <location>
        <begin position="336"/>
        <end position="339"/>
    </location>
</feature>
<feature type="helix" evidence="27">
    <location>
        <begin position="342"/>
        <end position="356"/>
    </location>
</feature>
<feature type="helix" evidence="27">
    <location>
        <begin position="360"/>
        <end position="373"/>
    </location>
</feature>
<feature type="helix" evidence="27">
    <location>
        <begin position="376"/>
        <end position="379"/>
    </location>
</feature>
<feature type="helix" evidence="27">
    <location>
        <begin position="382"/>
        <end position="395"/>
    </location>
</feature>
<feature type="helix" evidence="27">
    <location>
        <begin position="401"/>
        <end position="403"/>
    </location>
</feature>
<feature type="helix" evidence="27">
    <location>
        <begin position="404"/>
        <end position="421"/>
    </location>
</feature>
<feature type="strand" evidence="27">
    <location>
        <begin position="427"/>
        <end position="429"/>
    </location>
</feature>
<feature type="turn" evidence="27">
    <location>
        <begin position="434"/>
        <end position="437"/>
    </location>
</feature>
<feature type="helix" evidence="27">
    <location>
        <begin position="440"/>
        <end position="453"/>
    </location>
</feature>
<feature type="helix" evidence="27">
    <location>
        <begin position="457"/>
        <end position="461"/>
    </location>
</feature>
<sequence length="463" mass="51293">MAGAGERKGKKDDNGIGTAIDFVLSNARLVLGVGGAAMLGIATLAVKRMYDRAISAPTSPTRLSHSGKRSWEEPNWMGSPRLLNRDMKTGLSRSLQTLPTDSSTFDTDTFCPPRPKPVARKGQVDLKKSRLRMSLQEKLLTYYRNRAAIPAGEQARAKQAAVDICAELRSFLRAKLPDMPLRDMYLSGSLYDDLQVVTADHIQLIVPLVLEQNLWSCIPGEDTIMNVPGFFLVRRENPEYFPRGSSYWDRCVVGGYLSPKTVADTFEKVVAGSINWPAIGSLLDYVIRPAPPPEALTLEVQYERDKHLFIDFLPSVTLGDTVLVAKPHRLAQYDNLWRLSLRPAETARLRALDQADSGCRSLCLKILKAICKSTPALGHLTASQLTNVILHLAQEEADWSPDMLADRFLQALRGLISYLEAGVLPSALNPKVNLFAELTPEEIDELGYTLYCSLSEPEVLLQT</sequence>
<dbReference type="EMBL" id="AL365515">
    <property type="protein sequence ID" value="CAB97211.1"/>
    <property type="molecule type" value="mRNA"/>
</dbReference>
<dbReference type="EMBL" id="AK290954">
    <property type="protein sequence ID" value="BAF83643.1"/>
    <property type="molecule type" value="mRNA"/>
</dbReference>
<dbReference type="EMBL" id="AL834205">
    <property type="protein sequence ID" value="CAD38892.2"/>
    <property type="molecule type" value="mRNA"/>
</dbReference>
<dbReference type="EMBL" id="AL022312">
    <property type="status" value="NOT_ANNOTATED_CDS"/>
    <property type="molecule type" value="Genomic_DNA"/>
</dbReference>
<dbReference type="EMBL" id="CH471095">
    <property type="protein sequence ID" value="EAW60335.1"/>
    <property type="molecule type" value="Genomic_DNA"/>
</dbReference>
<dbReference type="EMBL" id="BC002587">
    <property type="protein sequence ID" value="AAH02587.2"/>
    <property type="molecule type" value="mRNA"/>
</dbReference>
<dbReference type="EMBL" id="BC008327">
    <property type="protein sequence ID" value="AAH08327.1"/>
    <property type="molecule type" value="mRNA"/>
</dbReference>
<dbReference type="EMBL" id="BC090137">
    <property type="protein sequence ID" value="AAH90137.1"/>
    <property type="molecule type" value="mRNA"/>
</dbReference>
<dbReference type="CCDS" id="CCDS13995.1">
    <molecule id="Q9NQG6-1"/>
</dbReference>
<dbReference type="RefSeq" id="NP_001291493.1">
    <property type="nucleotide sequence ID" value="NM_001304564.1"/>
</dbReference>
<dbReference type="RefSeq" id="NP_061881.2">
    <molecule id="Q9NQG6-1"/>
    <property type="nucleotide sequence ID" value="NM_019008.5"/>
</dbReference>
<dbReference type="RefSeq" id="XP_011528538.1">
    <property type="nucleotide sequence ID" value="XM_011530236.1"/>
</dbReference>
<dbReference type="RefSeq" id="XP_011528539.1">
    <property type="nucleotide sequence ID" value="XM_011530237.1"/>
</dbReference>
<dbReference type="RefSeq" id="XP_011528540.1">
    <property type="nucleotide sequence ID" value="XM_011530238.1"/>
</dbReference>
<dbReference type="RefSeq" id="XP_016884327.1">
    <property type="nucleotide sequence ID" value="XM_017028838.1"/>
</dbReference>
<dbReference type="PDB" id="4NXT">
    <property type="method" value="X-ray"/>
    <property type="resolution" value="2.12 A"/>
    <property type="chains" value="A/B/C/D=119-463"/>
</dbReference>
<dbReference type="PDB" id="4NXU">
    <property type="method" value="X-ray"/>
    <property type="resolution" value="2.30 A"/>
    <property type="chains" value="A/B/C/D=119-463"/>
</dbReference>
<dbReference type="PDB" id="4NXV">
    <property type="method" value="X-ray"/>
    <property type="resolution" value="2.30 A"/>
    <property type="chains" value="A/B/C/D=119-463"/>
</dbReference>
<dbReference type="PDB" id="4NXW">
    <property type="method" value="X-ray"/>
    <property type="resolution" value="2.55 A"/>
    <property type="chains" value="A=119-463"/>
</dbReference>
<dbReference type="PDB" id="4NXX">
    <property type="method" value="X-ray"/>
    <property type="resolution" value="2.55 A"/>
    <property type="chains" value="A=119-463"/>
</dbReference>
<dbReference type="PDB" id="5X9B">
    <property type="method" value="X-ray"/>
    <property type="resolution" value="2.70 A"/>
    <property type="chains" value="A=133-463"/>
</dbReference>
<dbReference type="PDB" id="5X9C">
    <property type="method" value="X-ray"/>
    <property type="resolution" value="1.85 A"/>
    <property type="chains" value="A/B=133-463"/>
</dbReference>
<dbReference type="PDBsum" id="4NXT"/>
<dbReference type="PDBsum" id="4NXU"/>
<dbReference type="PDBsum" id="4NXV"/>
<dbReference type="PDBsum" id="4NXW"/>
<dbReference type="PDBsum" id="4NXX"/>
<dbReference type="PDBsum" id="5X9B"/>
<dbReference type="PDBsum" id="5X9C"/>
<dbReference type="SMR" id="Q9NQG6"/>
<dbReference type="BioGRID" id="119977">
    <property type="interactions" value="57"/>
</dbReference>
<dbReference type="FunCoup" id="Q9NQG6">
    <property type="interactions" value="2421"/>
</dbReference>
<dbReference type="IntAct" id="Q9NQG6">
    <property type="interactions" value="43"/>
</dbReference>
<dbReference type="MINT" id="Q9NQG6"/>
<dbReference type="STRING" id="9606.ENSP00000385110"/>
<dbReference type="iPTMnet" id="Q9NQG6"/>
<dbReference type="PhosphoSitePlus" id="Q9NQG6"/>
<dbReference type="BioMuta" id="MIEF1"/>
<dbReference type="DMDM" id="74752902"/>
<dbReference type="jPOST" id="Q9NQG6"/>
<dbReference type="MassIVE" id="Q9NQG6"/>
<dbReference type="PaxDb" id="9606-ENSP00000327124"/>
<dbReference type="PeptideAtlas" id="Q9NQG6"/>
<dbReference type="ProteomicsDB" id="68833"/>
<dbReference type="ProteomicsDB" id="82149">
    <molecule id="Q9NQG6-1"/>
</dbReference>
<dbReference type="Pumba" id="Q9NQG6"/>
<dbReference type="Antibodypedia" id="26626">
    <property type="antibodies" value="153 antibodies from 26 providers"/>
</dbReference>
<dbReference type="DNASU" id="54471"/>
<dbReference type="Ensembl" id="ENST00000325301.7">
    <molecule id="Q9NQG6-1"/>
    <property type="protein sequence ID" value="ENSP00000327124.2"/>
    <property type="gene ID" value="ENSG00000100335.15"/>
</dbReference>
<dbReference type="Ensembl" id="ENST00000404569.5">
    <molecule id="Q9NQG6-1"/>
    <property type="protein sequence ID" value="ENSP00000385191.1"/>
    <property type="gene ID" value="ENSG00000100335.15"/>
</dbReference>
<dbReference type="Ensembl" id="ENST00000428069.1">
    <molecule id="Q9NQG6-2"/>
    <property type="protein sequence ID" value="ENSP00000413730.1"/>
    <property type="gene ID" value="ENSG00000100335.15"/>
</dbReference>
<dbReference type="Ensembl" id="ENST00000433117.6">
    <molecule id="Q9NQG6-2"/>
    <property type="protein sequence ID" value="ENSP00000404096.2"/>
    <property type="gene ID" value="ENSG00000100335.15"/>
</dbReference>
<dbReference type="GeneID" id="54471"/>
<dbReference type="KEGG" id="hsa:54471"/>
<dbReference type="MANE-Select" id="ENST00000325301.7">
    <property type="protein sequence ID" value="ENSP00000327124.2"/>
    <property type="RefSeq nucleotide sequence ID" value="NM_019008.6"/>
    <property type="RefSeq protein sequence ID" value="NP_061881.2"/>
</dbReference>
<dbReference type="UCSC" id="uc003axx.4">
    <molecule id="Q9NQG6-1"/>
    <property type="organism name" value="human"/>
</dbReference>
<dbReference type="AGR" id="HGNC:25979"/>
<dbReference type="CTD" id="54471"/>
<dbReference type="DisGeNET" id="54471"/>
<dbReference type="GeneCards" id="MIEF1"/>
<dbReference type="HGNC" id="HGNC:25979">
    <property type="gene designation" value="MIEF1"/>
</dbReference>
<dbReference type="HPA" id="ENSG00000100335">
    <property type="expression patterns" value="Low tissue specificity"/>
</dbReference>
<dbReference type="MalaCards" id="MIEF1"/>
<dbReference type="MIM" id="615497">
    <property type="type" value="gene"/>
</dbReference>
<dbReference type="MIM" id="620550">
    <property type="type" value="phenotype"/>
</dbReference>
<dbReference type="neXtProt" id="NX_Q9NQG6"/>
<dbReference type="OpenTargets" id="ENSG00000100335"/>
<dbReference type="PharmGKB" id="PA145148068"/>
<dbReference type="VEuPathDB" id="HostDB:ENSG00000100335"/>
<dbReference type="eggNOG" id="KOG4542">
    <property type="taxonomic scope" value="Eukaryota"/>
</dbReference>
<dbReference type="GeneTree" id="ENSGT00390000013127"/>
<dbReference type="HOGENOM" id="CLU_1758184_0_0_1"/>
<dbReference type="InParanoid" id="Q9NQG6"/>
<dbReference type="OMA" id="CEKEGDW"/>
<dbReference type="OrthoDB" id="5964386at2759"/>
<dbReference type="PAN-GO" id="Q9NQG6">
    <property type="GO annotations" value="2 GO annotations based on evolutionary models"/>
</dbReference>
<dbReference type="PhylomeDB" id="Q9NQG6"/>
<dbReference type="TreeFam" id="TF331032"/>
<dbReference type="PathwayCommons" id="Q9NQG6"/>
<dbReference type="SignaLink" id="Q9NQG6"/>
<dbReference type="BioGRID-ORCS" id="54471">
    <property type="hits" value="19 hits in 1143 CRISPR screens"/>
</dbReference>
<dbReference type="ChiTaRS" id="MIEF1">
    <property type="organism name" value="human"/>
</dbReference>
<dbReference type="EvolutionaryTrace" id="Q9NQG6"/>
<dbReference type="GeneWiki" id="SMCR7L"/>
<dbReference type="GenomeRNAi" id="54471"/>
<dbReference type="Pharos" id="Q9NQG6">
    <property type="development level" value="Tbio"/>
</dbReference>
<dbReference type="PRO" id="PR:Q9NQG6"/>
<dbReference type="Proteomes" id="UP000005640">
    <property type="component" value="Chromosome 22"/>
</dbReference>
<dbReference type="RNAct" id="Q9NQG6">
    <property type="molecule type" value="protein"/>
</dbReference>
<dbReference type="Bgee" id="ENSG00000100335">
    <property type="expression patterns" value="Expressed in sperm and 206 other cell types or tissues"/>
</dbReference>
<dbReference type="ExpressionAtlas" id="Q9NQG6">
    <property type="expression patterns" value="baseline and differential"/>
</dbReference>
<dbReference type="GO" id="GO:0005741">
    <property type="term" value="C:mitochondrial outer membrane"/>
    <property type="evidence" value="ECO:0000314"/>
    <property type="project" value="UniProtKB"/>
</dbReference>
<dbReference type="GO" id="GO:0005739">
    <property type="term" value="C:mitochondrion"/>
    <property type="evidence" value="ECO:0000314"/>
    <property type="project" value="UniProtKB"/>
</dbReference>
<dbReference type="GO" id="GO:0043531">
    <property type="term" value="F:ADP binding"/>
    <property type="evidence" value="ECO:0000314"/>
    <property type="project" value="MGI"/>
</dbReference>
<dbReference type="GO" id="GO:0019003">
    <property type="term" value="F:GDP binding"/>
    <property type="evidence" value="ECO:0000314"/>
    <property type="project" value="MGI"/>
</dbReference>
<dbReference type="GO" id="GO:0042802">
    <property type="term" value="F:identical protein binding"/>
    <property type="evidence" value="ECO:0000353"/>
    <property type="project" value="IntAct"/>
</dbReference>
<dbReference type="GO" id="GO:0000266">
    <property type="term" value="P:mitochondrial fission"/>
    <property type="evidence" value="ECO:0000315"/>
    <property type="project" value="UniProtKB"/>
</dbReference>
<dbReference type="GO" id="GO:0090141">
    <property type="term" value="P:positive regulation of mitochondrial fission"/>
    <property type="evidence" value="ECO:0000314"/>
    <property type="project" value="UniProtKB"/>
</dbReference>
<dbReference type="GO" id="GO:0010636">
    <property type="term" value="P:positive regulation of mitochondrial fusion"/>
    <property type="evidence" value="ECO:0000315"/>
    <property type="project" value="UniProtKB"/>
</dbReference>
<dbReference type="GO" id="GO:0090314">
    <property type="term" value="P:positive regulation of protein targeting to membrane"/>
    <property type="evidence" value="ECO:0000314"/>
    <property type="project" value="UniProtKB"/>
</dbReference>
<dbReference type="FunFam" id="1.10.1410.40:FF:000003">
    <property type="entry name" value="Mitochondrial dynamics protein MID51"/>
    <property type="match status" value="1"/>
</dbReference>
<dbReference type="FunFam" id="3.30.460.90:FF:000002">
    <property type="entry name" value="Mitochondrial dynamics protein MID51"/>
    <property type="match status" value="1"/>
</dbReference>
<dbReference type="Gene3D" id="1.10.1410.40">
    <property type="match status" value="1"/>
</dbReference>
<dbReference type="Gene3D" id="3.30.460.90">
    <property type="match status" value="1"/>
</dbReference>
<dbReference type="InterPro" id="IPR046906">
    <property type="entry name" value="Mab-21_HhH/H2TH-like"/>
</dbReference>
<dbReference type="InterPro" id="IPR024810">
    <property type="entry name" value="MAB21L/cGLR"/>
</dbReference>
<dbReference type="InterPro" id="IPR045909">
    <property type="entry name" value="MID49/MID51"/>
</dbReference>
<dbReference type="InterPro" id="IPR049097">
    <property type="entry name" value="MID51-like_C"/>
</dbReference>
<dbReference type="PANTHER" id="PTHR16451:SF12">
    <property type="entry name" value="MITOCHONDRIAL DYNAMICS PROTEIN MIEF1"/>
    <property type="match status" value="1"/>
</dbReference>
<dbReference type="PANTHER" id="PTHR16451">
    <property type="entry name" value="MITOCHONDRIAL DYNAMICS PROTEINS 49/51 FAMILY MEMBER"/>
    <property type="match status" value="1"/>
</dbReference>
<dbReference type="Pfam" id="PF20266">
    <property type="entry name" value="Mab-21_C"/>
    <property type="match status" value="1"/>
</dbReference>
<dbReference type="Pfam" id="PF21297">
    <property type="entry name" value="MID51-like_C"/>
    <property type="match status" value="1"/>
</dbReference>
<dbReference type="SMART" id="SM01265">
    <property type="entry name" value="Mab-21"/>
    <property type="match status" value="1"/>
</dbReference>
<keyword id="KW-0002">3D-structure</keyword>
<keyword id="KW-0024">Alternative initiation</keyword>
<keyword id="KW-0025">Alternative splicing</keyword>
<keyword id="KW-0472">Membrane</keyword>
<keyword id="KW-0496">Mitochondrion</keyword>
<keyword id="KW-1000">Mitochondrion outer membrane</keyword>
<keyword id="KW-0547">Nucleotide-binding</keyword>
<keyword id="KW-0597">Phosphoprotein</keyword>
<keyword id="KW-1267">Proteomics identification</keyword>
<keyword id="KW-1185">Reference proteome</keyword>
<keyword id="KW-0812">Transmembrane</keyword>
<keyword id="KW-1133">Transmembrane helix</keyword>
<name>MID51_HUMAN</name>